<comment type="function">
    <text evidence="1">NDH-1 shuttles electrons from an unknown electron donor, via FMN and iron-sulfur (Fe-S) centers, to quinones in the respiratory and/or the photosynthetic chain. The immediate electron acceptor for the enzyme in this species is believed to be plastoquinone. Couples the redox reaction to proton translocation, and thus conserves the redox energy in a proton gradient. Cyanobacterial NDH-1 also plays a role in inorganic carbon-concentration.</text>
</comment>
<comment type="catalytic activity">
    <reaction evidence="1">
        <text>a plastoquinone + NADH + (n+1) H(+)(in) = a plastoquinol + NAD(+) + n H(+)(out)</text>
        <dbReference type="Rhea" id="RHEA:42608"/>
        <dbReference type="Rhea" id="RHEA-COMP:9561"/>
        <dbReference type="Rhea" id="RHEA-COMP:9562"/>
        <dbReference type="ChEBI" id="CHEBI:15378"/>
        <dbReference type="ChEBI" id="CHEBI:17757"/>
        <dbReference type="ChEBI" id="CHEBI:57540"/>
        <dbReference type="ChEBI" id="CHEBI:57945"/>
        <dbReference type="ChEBI" id="CHEBI:62192"/>
    </reaction>
</comment>
<comment type="catalytic activity">
    <reaction evidence="1">
        <text>a plastoquinone + NADPH + (n+1) H(+)(in) = a plastoquinol + NADP(+) + n H(+)(out)</text>
        <dbReference type="Rhea" id="RHEA:42612"/>
        <dbReference type="Rhea" id="RHEA-COMP:9561"/>
        <dbReference type="Rhea" id="RHEA-COMP:9562"/>
        <dbReference type="ChEBI" id="CHEBI:15378"/>
        <dbReference type="ChEBI" id="CHEBI:17757"/>
        <dbReference type="ChEBI" id="CHEBI:57783"/>
        <dbReference type="ChEBI" id="CHEBI:58349"/>
        <dbReference type="ChEBI" id="CHEBI:62192"/>
    </reaction>
</comment>
<comment type="subunit">
    <text evidence="1">NDH-1 can be composed of about 15 different subunits; different subcomplexes with different compositions have been identified which probably have different functions.</text>
</comment>
<comment type="subcellular location">
    <subcellularLocation>
        <location evidence="1">Cellular thylakoid membrane</location>
        <topology evidence="1">Peripheral membrane protein</topology>
        <orientation evidence="1">Cytoplasmic side</orientation>
    </subcellularLocation>
</comment>
<comment type="similarity">
    <text evidence="1">Belongs to the complex I NdhM subunit family.</text>
</comment>
<reference key="1">
    <citation type="journal article" date="2013" name="Plant Physiol.">
        <title>A Nostoc punctiforme Sugar Transporter Necessary to Establish a Cyanobacterium-Plant Symbiosis.</title>
        <authorList>
            <person name="Ekman M."/>
            <person name="Picossi S."/>
            <person name="Campbell E.L."/>
            <person name="Meeks J.C."/>
            <person name="Flores E."/>
        </authorList>
    </citation>
    <scope>NUCLEOTIDE SEQUENCE [LARGE SCALE GENOMIC DNA]</scope>
    <source>
        <strain>ATCC 29133 / PCC 73102</strain>
    </source>
</reference>
<organism>
    <name type="scientific">Nostoc punctiforme (strain ATCC 29133 / PCC 73102)</name>
    <dbReference type="NCBI Taxonomy" id="63737"/>
    <lineage>
        <taxon>Bacteria</taxon>
        <taxon>Bacillati</taxon>
        <taxon>Cyanobacteriota</taxon>
        <taxon>Cyanophyceae</taxon>
        <taxon>Nostocales</taxon>
        <taxon>Nostocaceae</taxon>
        <taxon>Nostoc</taxon>
    </lineage>
</organism>
<sequence length="121" mass="13762">MDNPMLLKSTTRHVRIFAGEIDRDGDLVPSQQVLTLDIDPDNEFNWNEDALQKVYRKFDELVEASSGADLTDYNLRRVGSDLEHYLRSLLQLGEISYNLSARVTNYSMGVPQVAIDDKQVS</sequence>
<gene>
    <name evidence="1" type="primary">ndhM</name>
    <name type="ordered locus">Npun_F1518</name>
</gene>
<dbReference type="EC" id="7.1.1.-" evidence="1"/>
<dbReference type="EMBL" id="CP001037">
    <property type="protein sequence ID" value="ACC80208.1"/>
    <property type="molecule type" value="Genomic_DNA"/>
</dbReference>
<dbReference type="RefSeq" id="WP_012408226.1">
    <property type="nucleotide sequence ID" value="NC_010628.1"/>
</dbReference>
<dbReference type="SMR" id="B2IZS8"/>
<dbReference type="STRING" id="63737.Npun_F1518"/>
<dbReference type="EnsemblBacteria" id="ACC80208">
    <property type="protein sequence ID" value="ACC80208"/>
    <property type="gene ID" value="Npun_F1518"/>
</dbReference>
<dbReference type="KEGG" id="npu:Npun_F1518"/>
<dbReference type="eggNOG" id="ENOG5031AQM">
    <property type="taxonomic scope" value="Bacteria"/>
</dbReference>
<dbReference type="HOGENOM" id="CLU_137431_0_0_3"/>
<dbReference type="OrthoDB" id="461686at2"/>
<dbReference type="PhylomeDB" id="B2IZS8"/>
<dbReference type="Proteomes" id="UP000001191">
    <property type="component" value="Chromosome"/>
</dbReference>
<dbReference type="GO" id="GO:0031676">
    <property type="term" value="C:plasma membrane-derived thylakoid membrane"/>
    <property type="evidence" value="ECO:0007669"/>
    <property type="project" value="UniProtKB-SubCell"/>
</dbReference>
<dbReference type="GO" id="GO:0016655">
    <property type="term" value="F:oxidoreductase activity, acting on NAD(P)H, quinone or similar compound as acceptor"/>
    <property type="evidence" value="ECO:0007669"/>
    <property type="project" value="UniProtKB-UniRule"/>
</dbReference>
<dbReference type="GO" id="GO:0048038">
    <property type="term" value="F:quinone binding"/>
    <property type="evidence" value="ECO:0007669"/>
    <property type="project" value="UniProtKB-KW"/>
</dbReference>
<dbReference type="HAMAP" id="MF_01352">
    <property type="entry name" value="NDH1_NDH1M"/>
    <property type="match status" value="1"/>
</dbReference>
<dbReference type="InterPro" id="IPR018922">
    <property type="entry name" value="NdhM"/>
</dbReference>
<dbReference type="PANTHER" id="PTHR36900">
    <property type="entry name" value="NAD(P)H-QUINONE OXIDOREDUCTASE SUBUNIT M, CHLOROPLASTIC"/>
    <property type="match status" value="1"/>
</dbReference>
<dbReference type="PANTHER" id="PTHR36900:SF1">
    <property type="entry name" value="NAD(P)H-QUINONE OXIDOREDUCTASE SUBUNIT M, CHLOROPLASTIC"/>
    <property type="match status" value="1"/>
</dbReference>
<dbReference type="Pfam" id="PF10664">
    <property type="entry name" value="NdhM"/>
    <property type="match status" value="1"/>
</dbReference>
<keyword id="KW-0472">Membrane</keyword>
<keyword id="KW-0520">NAD</keyword>
<keyword id="KW-0521">NADP</keyword>
<keyword id="KW-0618">Plastoquinone</keyword>
<keyword id="KW-0874">Quinone</keyword>
<keyword id="KW-1185">Reference proteome</keyword>
<keyword id="KW-0793">Thylakoid</keyword>
<keyword id="KW-1278">Translocase</keyword>
<keyword id="KW-0813">Transport</keyword>
<evidence type="ECO:0000255" key="1">
    <source>
        <dbReference type="HAMAP-Rule" id="MF_01352"/>
    </source>
</evidence>
<name>NDHM_NOSP7</name>
<protein>
    <recommendedName>
        <fullName evidence="1">NAD(P)H-quinone oxidoreductase subunit M</fullName>
        <ecNumber evidence="1">7.1.1.-</ecNumber>
    </recommendedName>
    <alternativeName>
        <fullName evidence="1">NAD(P)H dehydrogenase I subunit M</fullName>
        <shortName evidence="1">NDH-1 subunit M</shortName>
        <shortName evidence="1">NDH-M</shortName>
    </alternativeName>
</protein>
<proteinExistence type="inferred from homology"/>
<accession>B2IZS8</accession>
<feature type="chain" id="PRO_0000352184" description="NAD(P)H-quinone oxidoreductase subunit M">
    <location>
        <begin position="1"/>
        <end position="121"/>
    </location>
</feature>